<reference key="1">
    <citation type="journal article" date="1999" name="Biochim. Biophys. Acta">
        <title>A Caenorhabditis elegans wee1 homolog is expressed in a temporally and spatially restricted pattern during embryonic development.</title>
        <authorList>
            <person name="Wilson M.A."/>
            <person name="Hoch R.V."/>
            <person name="Ashcroft N.R."/>
            <person name="Kosinski M.E."/>
            <person name="Golden A."/>
        </authorList>
    </citation>
    <scope>NUCLEOTIDE SEQUENCE [MRNA]</scope>
    <scope>SUBCELLULAR LOCATION</scope>
    <scope>TISSUE SPECIFICITY</scope>
</reference>
<reference key="2">
    <citation type="journal article" date="1998" name="Science">
        <title>Genome sequence of the nematode C. elegans: a platform for investigating biology.</title>
        <authorList>
            <consortium name="The C. elegans sequencing consortium"/>
        </authorList>
    </citation>
    <scope>NUCLEOTIDE SEQUENCE [LARGE SCALE GENOMIC DNA]</scope>
    <source>
        <strain>Bristol N2</strain>
    </source>
</reference>
<sequence>MNSVLSNIEKLDTYILRRNEYVAESKDEPNKLNTSRKLEVTTKKNQSNNKKRPPPINKARKSLPSIFRRAEENKDSAQIITPTGSKIIGSPLYKRSKSDSFFDHAFNFDKNLGKGSFGEVVAATCRSTSKKFAIKKIPFSKLSKDQYREAYGHMNIPCHPNIVRFHQAWIDKQILHIQLEMCDKSLAAYCHGIDWLEDKELWNVFLDILQGLGHLHNNFMLHNDIKPDNIFMTKNKVCKLGDFGLISDMRSEPINNSSNKHYQSEGDGKYCSKEAINGTLSIFSDIFSFGISILEVGTNIHLPSYGTGWEPIRKWEIPEEILEPMSDELRELVKQMMDKAPTRRPTCSELMKNHVVKEKLRIRKQEVEHIPSESQFQPISYLTTESPLGSRESSCSSIDFLDHFENAEKKTPFVSKLNFDLEDDEDEYEVFSPPRTPVKKSRYQQTMPEVSPPRKIQKLFQRKNLFDE</sequence>
<evidence type="ECO:0000250" key="1"/>
<evidence type="ECO:0000255" key="2">
    <source>
        <dbReference type="PROSITE-ProRule" id="PRU00159"/>
    </source>
</evidence>
<evidence type="ECO:0000255" key="3">
    <source>
        <dbReference type="PROSITE-ProRule" id="PRU10027"/>
    </source>
</evidence>
<evidence type="ECO:0000256" key="4">
    <source>
        <dbReference type="SAM" id="MobiDB-lite"/>
    </source>
</evidence>
<evidence type="ECO:0000269" key="5">
    <source>
    </source>
</evidence>
<keyword id="KW-0067">ATP-binding</keyword>
<keyword id="KW-0131">Cell cycle</keyword>
<keyword id="KW-0217">Developmental protein</keyword>
<keyword id="KW-0221">Differentiation</keyword>
<keyword id="KW-0418">Kinase</keyword>
<keyword id="KW-0460">Magnesium</keyword>
<keyword id="KW-0479">Metal-binding</keyword>
<keyword id="KW-0547">Nucleotide-binding</keyword>
<keyword id="KW-0539">Nucleus</keyword>
<keyword id="KW-1185">Reference proteome</keyword>
<keyword id="KW-0723">Serine/threonine-protein kinase</keyword>
<keyword id="KW-0808">Transferase</keyword>
<organism>
    <name type="scientific">Caenorhabditis elegans</name>
    <dbReference type="NCBI Taxonomy" id="6239"/>
    <lineage>
        <taxon>Eukaryota</taxon>
        <taxon>Metazoa</taxon>
        <taxon>Ecdysozoa</taxon>
        <taxon>Nematoda</taxon>
        <taxon>Chromadorea</taxon>
        <taxon>Rhabditida</taxon>
        <taxon>Rhabditina</taxon>
        <taxon>Rhabditomorpha</taxon>
        <taxon>Rhabditoidea</taxon>
        <taxon>Rhabditidae</taxon>
        <taxon>Peloderinae</taxon>
        <taxon>Caenorhabditis</taxon>
    </lineage>
</organism>
<dbReference type="EC" id="2.7.11.1"/>
<dbReference type="EMBL" id="Z36752">
    <property type="protein sequence ID" value="CAA85329.1"/>
    <property type="molecule type" value="Genomic_DNA"/>
</dbReference>
<dbReference type="PIR" id="T21824">
    <property type="entry name" value="T21824"/>
</dbReference>
<dbReference type="RefSeq" id="NP_496058.1">
    <property type="nucleotide sequence ID" value="NM_063657.3"/>
</dbReference>
<dbReference type="SMR" id="Q20085"/>
<dbReference type="FunCoup" id="Q20085">
    <property type="interactions" value="1018"/>
</dbReference>
<dbReference type="STRING" id="6239.F35H8.7.1"/>
<dbReference type="PaxDb" id="6239-F35H8.7"/>
<dbReference type="EnsemblMetazoa" id="F35H8.7.1">
    <property type="protein sequence ID" value="F35H8.7.1"/>
    <property type="gene ID" value="WBGene00006938"/>
</dbReference>
<dbReference type="GeneID" id="192085"/>
<dbReference type="KEGG" id="cel:CELE_F35H8.7"/>
<dbReference type="UCSC" id="F35H8.7">
    <property type="organism name" value="c. elegans"/>
</dbReference>
<dbReference type="AGR" id="WB:WBGene00006938"/>
<dbReference type="CTD" id="192085"/>
<dbReference type="WormBase" id="F35H8.7">
    <property type="protein sequence ID" value="CE09940"/>
    <property type="gene ID" value="WBGene00006938"/>
    <property type="gene designation" value="wee-1.1"/>
</dbReference>
<dbReference type="eggNOG" id="KOG0601">
    <property type="taxonomic scope" value="Eukaryota"/>
</dbReference>
<dbReference type="GeneTree" id="ENSGT00940000159427"/>
<dbReference type="HOGENOM" id="CLU_584270_0_0_1"/>
<dbReference type="InParanoid" id="Q20085"/>
<dbReference type="OMA" id="NYLQMEY"/>
<dbReference type="OrthoDB" id="5337378at2759"/>
<dbReference type="PhylomeDB" id="Q20085"/>
<dbReference type="PRO" id="PR:Q20085"/>
<dbReference type="Proteomes" id="UP000001940">
    <property type="component" value="Chromosome II"/>
</dbReference>
<dbReference type="Bgee" id="WBGene00006938">
    <property type="expression patterns" value="Expressed in embryonic cell and 11 other cell types or tissues"/>
</dbReference>
<dbReference type="GO" id="GO:0005737">
    <property type="term" value="C:cytoplasm"/>
    <property type="evidence" value="ECO:0000318"/>
    <property type="project" value="GO_Central"/>
</dbReference>
<dbReference type="GO" id="GO:0005634">
    <property type="term" value="C:nucleus"/>
    <property type="evidence" value="ECO:0000318"/>
    <property type="project" value="GO_Central"/>
</dbReference>
<dbReference type="GO" id="GO:0005524">
    <property type="term" value="F:ATP binding"/>
    <property type="evidence" value="ECO:0007669"/>
    <property type="project" value="UniProtKB-KW"/>
</dbReference>
<dbReference type="GO" id="GO:0046872">
    <property type="term" value="F:metal ion binding"/>
    <property type="evidence" value="ECO:0007669"/>
    <property type="project" value="UniProtKB-KW"/>
</dbReference>
<dbReference type="GO" id="GO:0004672">
    <property type="term" value="F:protein kinase activity"/>
    <property type="evidence" value="ECO:0000318"/>
    <property type="project" value="GO_Central"/>
</dbReference>
<dbReference type="GO" id="GO:0106310">
    <property type="term" value="F:protein serine kinase activity"/>
    <property type="evidence" value="ECO:0007669"/>
    <property type="project" value="RHEA"/>
</dbReference>
<dbReference type="GO" id="GO:0004674">
    <property type="term" value="F:protein serine/threonine kinase activity"/>
    <property type="evidence" value="ECO:0007669"/>
    <property type="project" value="UniProtKB-KW"/>
</dbReference>
<dbReference type="GO" id="GO:0004713">
    <property type="term" value="F:protein tyrosine kinase activity"/>
    <property type="evidence" value="ECO:0000304"/>
    <property type="project" value="UniProtKB"/>
</dbReference>
<dbReference type="GO" id="GO:0030154">
    <property type="term" value="P:cell differentiation"/>
    <property type="evidence" value="ECO:0007669"/>
    <property type="project" value="UniProtKB-KW"/>
</dbReference>
<dbReference type="GO" id="GO:0051301">
    <property type="term" value="P:cell division"/>
    <property type="evidence" value="ECO:0000304"/>
    <property type="project" value="UniProtKB"/>
</dbReference>
<dbReference type="GO" id="GO:0051321">
    <property type="term" value="P:meiotic cell cycle"/>
    <property type="evidence" value="ECO:0000318"/>
    <property type="project" value="GO_Central"/>
</dbReference>
<dbReference type="GO" id="GO:0010972">
    <property type="term" value="P:negative regulation of G2/M transition of mitotic cell cycle"/>
    <property type="evidence" value="ECO:0000318"/>
    <property type="project" value="GO_Central"/>
</dbReference>
<dbReference type="GO" id="GO:0110031">
    <property type="term" value="P:negative regulation of G2/MI transition of meiotic cell cycle"/>
    <property type="evidence" value="ECO:0000318"/>
    <property type="project" value="GO_Central"/>
</dbReference>
<dbReference type="CDD" id="cd14050">
    <property type="entry name" value="PKc_Myt1"/>
    <property type="match status" value="1"/>
</dbReference>
<dbReference type="FunFam" id="1.10.510.10:FF:001421">
    <property type="entry name" value="Membrane-associated tyrosine-and threonine-specific cdc2-inhibitory kinase-like Protein"/>
    <property type="match status" value="1"/>
</dbReference>
<dbReference type="Gene3D" id="3.30.200.20">
    <property type="entry name" value="Phosphorylase Kinase, domain 1"/>
    <property type="match status" value="1"/>
</dbReference>
<dbReference type="Gene3D" id="1.10.510.10">
    <property type="entry name" value="Transferase(Phosphotransferase) domain 1"/>
    <property type="match status" value="1"/>
</dbReference>
<dbReference type="InterPro" id="IPR050339">
    <property type="entry name" value="CC_SR_Kinase"/>
</dbReference>
<dbReference type="InterPro" id="IPR011009">
    <property type="entry name" value="Kinase-like_dom_sf"/>
</dbReference>
<dbReference type="InterPro" id="IPR000719">
    <property type="entry name" value="Prot_kinase_dom"/>
</dbReference>
<dbReference type="InterPro" id="IPR017441">
    <property type="entry name" value="Protein_kinase_ATP_BS"/>
</dbReference>
<dbReference type="InterPro" id="IPR008271">
    <property type="entry name" value="Ser/Thr_kinase_AS"/>
</dbReference>
<dbReference type="PANTHER" id="PTHR11042">
    <property type="entry name" value="EUKARYOTIC TRANSLATION INITIATION FACTOR 2-ALPHA KINASE EIF2-ALPHA KINASE -RELATED"/>
    <property type="match status" value="1"/>
</dbReference>
<dbReference type="PANTHER" id="PTHR11042:SF183">
    <property type="entry name" value="MEMBRANE-ASSOCIATED TYROSINE- AND THREONINE-SPECIFIC CDC2-INHIBITORY KINASE"/>
    <property type="match status" value="1"/>
</dbReference>
<dbReference type="Pfam" id="PF00069">
    <property type="entry name" value="Pkinase"/>
    <property type="match status" value="1"/>
</dbReference>
<dbReference type="SMART" id="SM00220">
    <property type="entry name" value="S_TKc"/>
    <property type="match status" value="1"/>
</dbReference>
<dbReference type="SUPFAM" id="SSF56112">
    <property type="entry name" value="Protein kinase-like (PK-like)"/>
    <property type="match status" value="1"/>
</dbReference>
<dbReference type="PROSITE" id="PS00107">
    <property type="entry name" value="PROTEIN_KINASE_ATP"/>
    <property type="match status" value="1"/>
</dbReference>
<dbReference type="PROSITE" id="PS50011">
    <property type="entry name" value="PROTEIN_KINASE_DOM"/>
    <property type="match status" value="1"/>
</dbReference>
<dbReference type="PROSITE" id="PS00108">
    <property type="entry name" value="PROTEIN_KINASE_ST"/>
    <property type="match status" value="1"/>
</dbReference>
<protein>
    <recommendedName>
        <fullName>Membrane-associated tyrosine- and threonine-specific cdc2-inhibitory kinase wee-1.1</fullName>
        <ecNumber>2.7.11.1</ecNumber>
    </recommendedName>
    <alternativeName>
        <fullName>Myt1 kinase</fullName>
    </alternativeName>
</protein>
<name>PMY11_CAEEL</name>
<accession>Q20085</accession>
<comment type="function">
    <text evidence="1">Acts as a negative regulator of entry into mitosis (G2 to M transition) by phosphorylation of the CDK1 kinase.</text>
</comment>
<comment type="catalytic activity">
    <reaction>
        <text>L-seryl-[protein] + ATP = O-phospho-L-seryl-[protein] + ADP + H(+)</text>
        <dbReference type="Rhea" id="RHEA:17989"/>
        <dbReference type="Rhea" id="RHEA-COMP:9863"/>
        <dbReference type="Rhea" id="RHEA-COMP:11604"/>
        <dbReference type="ChEBI" id="CHEBI:15378"/>
        <dbReference type="ChEBI" id="CHEBI:29999"/>
        <dbReference type="ChEBI" id="CHEBI:30616"/>
        <dbReference type="ChEBI" id="CHEBI:83421"/>
        <dbReference type="ChEBI" id="CHEBI:456216"/>
        <dbReference type="EC" id="2.7.11.1"/>
    </reaction>
</comment>
<comment type="catalytic activity">
    <reaction>
        <text>L-threonyl-[protein] + ATP = O-phospho-L-threonyl-[protein] + ADP + H(+)</text>
        <dbReference type="Rhea" id="RHEA:46608"/>
        <dbReference type="Rhea" id="RHEA-COMP:11060"/>
        <dbReference type="Rhea" id="RHEA-COMP:11605"/>
        <dbReference type="ChEBI" id="CHEBI:15378"/>
        <dbReference type="ChEBI" id="CHEBI:30013"/>
        <dbReference type="ChEBI" id="CHEBI:30616"/>
        <dbReference type="ChEBI" id="CHEBI:61977"/>
        <dbReference type="ChEBI" id="CHEBI:456216"/>
        <dbReference type="EC" id="2.7.11.1"/>
    </reaction>
</comment>
<comment type="subcellular location">
    <subcellularLocation>
        <location evidence="5">Nucleus</location>
    </subcellularLocation>
    <text>Observed in the nucleus during prophase and metaphase.</text>
</comment>
<comment type="tissue specificity">
    <text evidence="5">In the 12-13-cell embryo, expressed in the E blastomere. In the 16-cell embryo, expressed in the eight AB cells.</text>
</comment>
<comment type="developmental stage">
    <text>Expression is first seen in the 12-13-cell embryo and is last observed in the 16-cell embryo before division.</text>
</comment>
<comment type="similarity">
    <text evidence="2">Belongs to the protein kinase superfamily. Ser/Thr protein kinase family. WEE1 subfamily.</text>
</comment>
<feature type="chain" id="PRO_0000086837" description="Membrane-associated tyrosine- and threonine-specific cdc2-inhibitory kinase wee-1.1">
    <location>
        <begin position="1"/>
        <end position="468"/>
    </location>
</feature>
<feature type="domain" description="Protein kinase" evidence="2">
    <location>
        <begin position="106"/>
        <end position="357"/>
    </location>
</feature>
<feature type="region of interest" description="Disordered" evidence="4">
    <location>
        <begin position="25"/>
        <end position="63"/>
    </location>
</feature>
<feature type="region of interest" description="Disordered" evidence="4">
    <location>
        <begin position="425"/>
        <end position="453"/>
    </location>
</feature>
<feature type="compositionally biased region" description="Basic and acidic residues" evidence="4">
    <location>
        <begin position="25"/>
        <end position="42"/>
    </location>
</feature>
<feature type="compositionally biased region" description="Basic residues" evidence="4">
    <location>
        <begin position="49"/>
        <end position="61"/>
    </location>
</feature>
<feature type="active site" description="Proton acceptor" evidence="2 3">
    <location>
        <position position="224"/>
    </location>
</feature>
<feature type="binding site" evidence="2">
    <location>
        <begin position="112"/>
        <end position="120"/>
    </location>
    <ligand>
        <name>ATP</name>
        <dbReference type="ChEBI" id="CHEBI:30616"/>
    </ligand>
</feature>
<feature type="binding site" evidence="2">
    <location>
        <position position="135"/>
    </location>
    <ligand>
        <name>ATP</name>
        <dbReference type="ChEBI" id="CHEBI:30616"/>
    </ligand>
</feature>
<feature type="binding site" evidence="1">
    <location>
        <position position="229"/>
    </location>
    <ligand>
        <name>Mg(2+)</name>
        <dbReference type="ChEBI" id="CHEBI:18420"/>
    </ligand>
</feature>
<feature type="binding site" evidence="1">
    <location>
        <position position="242"/>
    </location>
    <ligand>
        <name>Mg(2+)</name>
        <dbReference type="ChEBI" id="CHEBI:18420"/>
    </ligand>
</feature>
<gene>
    <name type="primary">wee-1.1</name>
    <name type="ORF">F35H8.7</name>
</gene>
<proteinExistence type="evidence at transcript level"/>